<comment type="function">
    <text evidence="1">ATPase which is responsible for recognizing, binding, unfolding and translocation of substrate proteins into the archaeal 20S proteasome core particle. Is essential for opening the gate of the 20S proteasome via an interaction with its C-terminus, thereby allowing substrate entry and access to the site of proteolysis. Thus, the C-termini of the proteasomal ATPase function like a 'key in a lock' to induce gate opening and therefore regulate proteolysis. Unfolding activity requires energy from ATP hydrolysis, whereas ATP binding alone promotes ATPase-20S proteasome association which triggers gate opening, and supports translocation of unfolded substrates.</text>
</comment>
<comment type="subunit">
    <text evidence="1">Homohexamer. The hexameric complex has a two-ring architecture resembling a top hat that caps the 20S proteasome core at one or both ends. Upon ATP-binding, the C-terminus of PAN interacts with the alpha-rings of the proteasome core by binding to the intersubunit pockets.</text>
</comment>
<comment type="subcellular location">
    <subcellularLocation>
        <location evidence="1">Cytoplasm</location>
    </subcellularLocation>
</comment>
<comment type="domain">
    <text evidence="1">Consists of three main regions, an N-terminal coiled-coil domain that may assist in substrate recognition, an interdomain involved in PAN hexamerization, and a C-terminal ATPase domain of the AAA type.</text>
</comment>
<comment type="similarity">
    <text evidence="1">Belongs to the AAA ATPase family.</text>
</comment>
<comment type="sequence caution" evidence="3">
    <conflict type="erroneous initiation">
        <sequence resource="EMBL-CDS" id="AAM30702"/>
    </conflict>
</comment>
<evidence type="ECO:0000255" key="1">
    <source>
        <dbReference type="HAMAP-Rule" id="MF_00553"/>
    </source>
</evidence>
<evidence type="ECO:0000256" key="2">
    <source>
        <dbReference type="SAM" id="MobiDB-lite"/>
    </source>
</evidence>
<evidence type="ECO:0000305" key="3"/>
<gene>
    <name evidence="1" type="primary">pan</name>
    <name type="ordered locus">MM_1006</name>
</gene>
<reference key="1">
    <citation type="journal article" date="2002" name="J. Mol. Microbiol. Biotechnol.">
        <title>The genome of Methanosarcina mazei: evidence for lateral gene transfer between Bacteria and Archaea.</title>
        <authorList>
            <person name="Deppenmeier U."/>
            <person name="Johann A."/>
            <person name="Hartsch T."/>
            <person name="Merkl R."/>
            <person name="Schmitz R.A."/>
            <person name="Martinez-Arias R."/>
            <person name="Henne A."/>
            <person name="Wiezer A."/>
            <person name="Baeumer S."/>
            <person name="Jacobi C."/>
            <person name="Brueggemann H."/>
            <person name="Lienard T."/>
            <person name="Christmann A."/>
            <person name="Boemecke M."/>
            <person name="Steckel S."/>
            <person name="Bhattacharyya A."/>
            <person name="Lykidis A."/>
            <person name="Overbeek R."/>
            <person name="Klenk H.-P."/>
            <person name="Gunsalus R.P."/>
            <person name="Fritz H.-J."/>
            <person name="Gottschalk G."/>
        </authorList>
    </citation>
    <scope>NUCLEOTIDE SEQUENCE [LARGE SCALE GENOMIC DNA]</scope>
    <source>
        <strain>ATCC BAA-159 / DSM 3647 / Goe1 / Go1 / JCM 11833 / OCM 88</strain>
    </source>
</reference>
<sequence length="420" mass="47056">MRSHLVKPGSVYDGIEPGELGETTESVQDRVRQLESRNSFLEEQCSQIESEKRYLENQKIKYEREIRKLQSELDRMKTSPLIIGTVIDVIKNDRIIVRSSNGPQFLVNVSQYIDEKKLLPGAKVALNQHTLAIAEVIPSTEEPFVAAMEVIESVEVDYDQIGGLDEQIQELQEAVELPLTSPERFARIGIEPPKGVLLYGLPGTGKTLLAKAVAHRTNATFIRVVGSELVQKYIGDGSKLVREIFEMARKKAPSIIFIDELDSIAARRLNETTGADREVQRTLMQLLAEMDGFDKRKNIRIIAATNRPDVLDPAILRPGRFDRLVHVPMPGIEARGKILKIHCEKMTLAEDIDFKKLAKATEGMSGADLKAIATEAGMFAVRRDKELVEMEEFLEAVEKVSMAADTQKMMPSNLPETMFV</sequence>
<dbReference type="EMBL" id="AE008384">
    <property type="protein sequence ID" value="AAM30702.1"/>
    <property type="status" value="ALT_INIT"/>
    <property type="molecule type" value="Genomic_DNA"/>
</dbReference>
<dbReference type="SMR" id="Q8PY58"/>
<dbReference type="KEGG" id="mma:MM_1006"/>
<dbReference type="PATRIC" id="fig|192952.21.peg.1179"/>
<dbReference type="eggNOG" id="arCOG01306">
    <property type="taxonomic scope" value="Archaea"/>
</dbReference>
<dbReference type="HOGENOM" id="CLU_000688_2_1_2"/>
<dbReference type="Proteomes" id="UP000000595">
    <property type="component" value="Chromosome"/>
</dbReference>
<dbReference type="GO" id="GO:0005737">
    <property type="term" value="C:cytoplasm"/>
    <property type="evidence" value="ECO:0007669"/>
    <property type="project" value="UniProtKB-SubCell"/>
</dbReference>
<dbReference type="GO" id="GO:0022623">
    <property type="term" value="C:proteasome-activating nucleotidase complex"/>
    <property type="evidence" value="ECO:0007669"/>
    <property type="project" value="UniProtKB-UniRule"/>
</dbReference>
<dbReference type="GO" id="GO:0005524">
    <property type="term" value="F:ATP binding"/>
    <property type="evidence" value="ECO:0007669"/>
    <property type="project" value="UniProtKB-UniRule"/>
</dbReference>
<dbReference type="GO" id="GO:0016887">
    <property type="term" value="F:ATP hydrolysis activity"/>
    <property type="evidence" value="ECO:0007669"/>
    <property type="project" value="UniProtKB-UniRule"/>
</dbReference>
<dbReference type="GO" id="GO:0010498">
    <property type="term" value="P:proteasomal protein catabolic process"/>
    <property type="evidence" value="ECO:0007669"/>
    <property type="project" value="UniProtKB-UniRule"/>
</dbReference>
<dbReference type="GO" id="GO:0043335">
    <property type="term" value="P:protein unfolding"/>
    <property type="evidence" value="ECO:0007669"/>
    <property type="project" value="UniProtKB-UniRule"/>
</dbReference>
<dbReference type="CDD" id="cd19502">
    <property type="entry name" value="RecA-like_PAN_like"/>
    <property type="match status" value="1"/>
</dbReference>
<dbReference type="FunFam" id="3.40.50.300:FF:000033">
    <property type="entry name" value="26S protease regulatory subunit 6B"/>
    <property type="match status" value="1"/>
</dbReference>
<dbReference type="Gene3D" id="1.10.8.60">
    <property type="match status" value="1"/>
</dbReference>
<dbReference type="Gene3D" id="2.40.50.140">
    <property type="entry name" value="Nucleic acid-binding proteins"/>
    <property type="match status" value="1"/>
</dbReference>
<dbReference type="Gene3D" id="3.40.50.300">
    <property type="entry name" value="P-loop containing nucleotide triphosphate hydrolases"/>
    <property type="match status" value="1"/>
</dbReference>
<dbReference type="HAMAP" id="MF_00553">
    <property type="entry name" value="PAN"/>
    <property type="match status" value="1"/>
</dbReference>
<dbReference type="InterPro" id="IPR050221">
    <property type="entry name" value="26S_Proteasome_ATPase"/>
</dbReference>
<dbReference type="InterPro" id="IPR003593">
    <property type="entry name" value="AAA+_ATPase"/>
</dbReference>
<dbReference type="InterPro" id="IPR041569">
    <property type="entry name" value="AAA_lid_3"/>
</dbReference>
<dbReference type="InterPro" id="IPR003959">
    <property type="entry name" value="ATPase_AAA_core"/>
</dbReference>
<dbReference type="InterPro" id="IPR003960">
    <property type="entry name" value="ATPase_AAA_CS"/>
</dbReference>
<dbReference type="InterPro" id="IPR012340">
    <property type="entry name" value="NA-bd_OB-fold"/>
</dbReference>
<dbReference type="InterPro" id="IPR023501">
    <property type="entry name" value="Nucleotidase_PAN"/>
</dbReference>
<dbReference type="InterPro" id="IPR027417">
    <property type="entry name" value="P-loop_NTPase"/>
</dbReference>
<dbReference type="InterPro" id="IPR032501">
    <property type="entry name" value="Prot_ATP_ID_OB_2nd"/>
</dbReference>
<dbReference type="NCBIfam" id="NF003069">
    <property type="entry name" value="PRK03992.1"/>
    <property type="match status" value="1"/>
</dbReference>
<dbReference type="NCBIfam" id="TIGR01242">
    <property type="entry name" value="proteasome-activating nucleotidase"/>
    <property type="match status" value="1"/>
</dbReference>
<dbReference type="PANTHER" id="PTHR23073">
    <property type="entry name" value="26S PROTEASOME REGULATORY SUBUNIT"/>
    <property type="match status" value="1"/>
</dbReference>
<dbReference type="Pfam" id="PF00004">
    <property type="entry name" value="AAA"/>
    <property type="match status" value="1"/>
</dbReference>
<dbReference type="Pfam" id="PF17862">
    <property type="entry name" value="AAA_lid_3"/>
    <property type="match status" value="1"/>
</dbReference>
<dbReference type="Pfam" id="PF16450">
    <property type="entry name" value="Prot_ATP_ID_OB_C"/>
    <property type="match status" value="1"/>
</dbReference>
<dbReference type="SMART" id="SM00382">
    <property type="entry name" value="AAA"/>
    <property type="match status" value="1"/>
</dbReference>
<dbReference type="SUPFAM" id="SSF52540">
    <property type="entry name" value="P-loop containing nucleoside triphosphate hydrolases"/>
    <property type="match status" value="1"/>
</dbReference>
<dbReference type="PROSITE" id="PS00674">
    <property type="entry name" value="AAA"/>
    <property type="match status" value="1"/>
</dbReference>
<protein>
    <recommendedName>
        <fullName evidence="1">Proteasome-activating nucleotidase</fullName>
        <shortName evidence="1">PAN</shortName>
    </recommendedName>
    <alternativeName>
        <fullName evidence="1">Proteasomal ATPase</fullName>
    </alternativeName>
    <alternativeName>
        <fullName evidence="1">Proteasome regulatory ATPase</fullName>
    </alternativeName>
    <alternativeName>
        <fullName evidence="1">Proteasome regulatory particle</fullName>
    </alternativeName>
</protein>
<name>PAN_METMA</name>
<feature type="chain" id="PRO_0000084745" description="Proteasome-activating nucleotidase">
    <location>
        <begin position="1"/>
        <end position="420"/>
    </location>
</feature>
<feature type="region of interest" description="Disordered" evidence="2">
    <location>
        <begin position="1"/>
        <end position="25"/>
    </location>
</feature>
<feature type="region of interest" description="Docks into pockets in the proteasome alpha-ring to cause gate opening" evidence="1">
    <location>
        <begin position="418"/>
        <end position="420"/>
    </location>
</feature>
<feature type="coiled-coil region" evidence="1">
    <location>
        <begin position="22"/>
        <end position="79"/>
    </location>
</feature>
<feature type="binding site" evidence="1">
    <location>
        <begin position="203"/>
        <end position="208"/>
    </location>
    <ligand>
        <name>ATP</name>
        <dbReference type="ChEBI" id="CHEBI:30616"/>
    </ligand>
</feature>
<feature type="binding site" evidence="1">
    <location>
        <position position="342"/>
    </location>
    <ligand>
        <name>ATP</name>
        <dbReference type="ChEBI" id="CHEBI:30616"/>
    </ligand>
</feature>
<organism>
    <name type="scientific">Methanosarcina mazei (strain ATCC BAA-159 / DSM 3647 / Goe1 / Go1 / JCM 11833 / OCM 88)</name>
    <name type="common">Methanosarcina frisia</name>
    <dbReference type="NCBI Taxonomy" id="192952"/>
    <lineage>
        <taxon>Archaea</taxon>
        <taxon>Methanobacteriati</taxon>
        <taxon>Methanobacteriota</taxon>
        <taxon>Stenosarchaea group</taxon>
        <taxon>Methanomicrobia</taxon>
        <taxon>Methanosarcinales</taxon>
        <taxon>Methanosarcinaceae</taxon>
        <taxon>Methanosarcina</taxon>
    </lineage>
</organism>
<proteinExistence type="inferred from homology"/>
<keyword id="KW-0067">ATP-binding</keyword>
<keyword id="KW-0143">Chaperone</keyword>
<keyword id="KW-0175">Coiled coil</keyword>
<keyword id="KW-0963">Cytoplasm</keyword>
<keyword id="KW-0547">Nucleotide-binding</keyword>
<keyword id="KW-0647">Proteasome</keyword>
<accession>Q8PY58</accession>